<dbReference type="EMBL" id="BC125148">
    <property type="protein sequence ID" value="AAI25149.1"/>
    <property type="molecule type" value="mRNA"/>
</dbReference>
<dbReference type="EMBL" id="BC125149">
    <property type="protein sequence ID" value="AAI25150.1"/>
    <property type="molecule type" value="mRNA"/>
</dbReference>
<dbReference type="CCDS" id="CCDS55195.1"/>
<dbReference type="RefSeq" id="NP_919260.2">
    <property type="nucleotide sequence ID" value="NM_194284.3"/>
</dbReference>
<dbReference type="SMR" id="Q96B33"/>
<dbReference type="BioGRID" id="126468">
    <property type="interactions" value="4"/>
</dbReference>
<dbReference type="FunCoup" id="Q96B33">
    <property type="interactions" value="390"/>
</dbReference>
<dbReference type="IntAct" id="Q96B33">
    <property type="interactions" value="1"/>
</dbReference>
<dbReference type="STRING" id="9606.ENSP00000428780"/>
<dbReference type="TCDB" id="1.H.1.1.4">
    <property type="family name" value="the claudin tight junction (claudin1) family"/>
</dbReference>
<dbReference type="iPTMnet" id="Q96B33"/>
<dbReference type="PhosphoSitePlus" id="Q96B33"/>
<dbReference type="SwissPalm" id="Q96B33"/>
<dbReference type="BioMuta" id="CLDN23"/>
<dbReference type="DMDM" id="47605532"/>
<dbReference type="jPOST" id="Q96B33"/>
<dbReference type="MassIVE" id="Q96B33"/>
<dbReference type="PaxDb" id="9606-ENSP00000428780"/>
<dbReference type="PeptideAtlas" id="Q96B33"/>
<dbReference type="ProteomicsDB" id="76039"/>
<dbReference type="Antibodypedia" id="52870">
    <property type="antibodies" value="116 antibodies from 23 providers"/>
</dbReference>
<dbReference type="DNASU" id="137075"/>
<dbReference type="Ensembl" id="ENST00000519106.2">
    <property type="protein sequence ID" value="ENSP00000428780.1"/>
    <property type="gene ID" value="ENSG00000253958.2"/>
</dbReference>
<dbReference type="Ensembl" id="ENST00000644143.2">
    <property type="protein sequence ID" value="ENSP00000495091.1"/>
    <property type="gene ID" value="ENSG00000285098.2"/>
</dbReference>
<dbReference type="GeneID" id="137075"/>
<dbReference type="KEGG" id="hsa:137075"/>
<dbReference type="MANE-Select" id="ENST00000519106.2">
    <property type="protein sequence ID" value="ENSP00000428780.1"/>
    <property type="RefSeq nucleotide sequence ID" value="NM_194284.3"/>
    <property type="RefSeq protein sequence ID" value="NP_919260.2"/>
</dbReference>
<dbReference type="UCSC" id="uc003wsi.4">
    <property type="organism name" value="human"/>
</dbReference>
<dbReference type="AGR" id="HGNC:17591"/>
<dbReference type="CTD" id="137075"/>
<dbReference type="DisGeNET" id="137075"/>
<dbReference type="GeneCards" id="CLDN23"/>
<dbReference type="HGNC" id="HGNC:17591">
    <property type="gene designation" value="CLDN23"/>
</dbReference>
<dbReference type="HPA" id="ENSG00000253958">
    <property type="expression patterns" value="Tissue enhanced (intestine, stomach)"/>
</dbReference>
<dbReference type="MIM" id="609203">
    <property type="type" value="gene"/>
</dbReference>
<dbReference type="neXtProt" id="NX_Q96B33"/>
<dbReference type="OpenTargets" id="ENSG00000253958"/>
<dbReference type="PharmGKB" id="PA134961253"/>
<dbReference type="VEuPathDB" id="HostDB:ENSG00000253958"/>
<dbReference type="eggNOG" id="ENOG502RYXX">
    <property type="taxonomic scope" value="Eukaryota"/>
</dbReference>
<dbReference type="GeneTree" id="ENSGT00390000006975"/>
<dbReference type="HOGENOM" id="CLU_089834_0_0_1"/>
<dbReference type="InParanoid" id="Q96B33"/>
<dbReference type="OMA" id="VRCWQDE"/>
<dbReference type="OrthoDB" id="8790791at2759"/>
<dbReference type="PAN-GO" id="Q96B33">
    <property type="GO annotations" value="4 GO annotations based on evolutionary models"/>
</dbReference>
<dbReference type="PhylomeDB" id="Q96B33"/>
<dbReference type="TreeFam" id="TF331936"/>
<dbReference type="PathwayCommons" id="Q96B33"/>
<dbReference type="Reactome" id="R-HSA-420029">
    <property type="pathway name" value="Tight junction interactions"/>
</dbReference>
<dbReference type="SignaLink" id="Q96B33"/>
<dbReference type="BioGRID-ORCS" id="137075">
    <property type="hits" value="13 hits in 1144 CRISPR screens"/>
</dbReference>
<dbReference type="GenomeRNAi" id="137075"/>
<dbReference type="Pharos" id="Q96B33">
    <property type="development level" value="Tbio"/>
</dbReference>
<dbReference type="PRO" id="PR:Q96B33"/>
<dbReference type="Proteomes" id="UP000005640">
    <property type="component" value="Chromosome 8"/>
</dbReference>
<dbReference type="RNAct" id="Q96B33">
    <property type="molecule type" value="protein"/>
</dbReference>
<dbReference type="Bgee" id="ENSG00000253958">
    <property type="expression patterns" value="Expressed in mucosa of transverse colon and 91 other cell types or tissues"/>
</dbReference>
<dbReference type="GO" id="GO:0005923">
    <property type="term" value="C:bicellular tight junction"/>
    <property type="evidence" value="ECO:0000250"/>
    <property type="project" value="UniProtKB"/>
</dbReference>
<dbReference type="GO" id="GO:0005886">
    <property type="term" value="C:plasma membrane"/>
    <property type="evidence" value="ECO:0000318"/>
    <property type="project" value="GO_Central"/>
</dbReference>
<dbReference type="GO" id="GO:0042802">
    <property type="term" value="F:identical protein binding"/>
    <property type="evidence" value="ECO:0000250"/>
    <property type="project" value="UniProtKB"/>
</dbReference>
<dbReference type="GO" id="GO:0005198">
    <property type="term" value="F:structural molecule activity"/>
    <property type="evidence" value="ECO:0007669"/>
    <property type="project" value="InterPro"/>
</dbReference>
<dbReference type="GO" id="GO:0070830">
    <property type="term" value="P:bicellular tight junction assembly"/>
    <property type="evidence" value="ECO:0000318"/>
    <property type="project" value="GO_Central"/>
</dbReference>
<dbReference type="GO" id="GO:0016338">
    <property type="term" value="P:calcium-independent cell-cell adhesion via plasma membrane cell-adhesion molecules"/>
    <property type="evidence" value="ECO:0000250"/>
    <property type="project" value="UniProtKB"/>
</dbReference>
<dbReference type="GO" id="GO:0007155">
    <property type="term" value="P:cell adhesion"/>
    <property type="evidence" value="ECO:0000318"/>
    <property type="project" value="GO_Central"/>
</dbReference>
<dbReference type="FunFam" id="1.20.140.150:FF:000056">
    <property type="entry name" value="Claudin"/>
    <property type="match status" value="1"/>
</dbReference>
<dbReference type="Gene3D" id="1.20.140.150">
    <property type="match status" value="1"/>
</dbReference>
<dbReference type="InterPro" id="IPR006187">
    <property type="entry name" value="Claudin"/>
</dbReference>
<dbReference type="InterPro" id="IPR017974">
    <property type="entry name" value="Claudin_CS"/>
</dbReference>
<dbReference type="InterPro" id="IPR004031">
    <property type="entry name" value="PMP22/EMP/MP20/Claudin"/>
</dbReference>
<dbReference type="PANTHER" id="PTHR12002">
    <property type="entry name" value="CLAUDIN"/>
    <property type="match status" value="1"/>
</dbReference>
<dbReference type="Pfam" id="PF00822">
    <property type="entry name" value="PMP22_Claudin"/>
    <property type="match status" value="1"/>
</dbReference>
<dbReference type="PRINTS" id="PR01077">
    <property type="entry name" value="CLAUDIN"/>
</dbReference>
<dbReference type="PROSITE" id="PS01346">
    <property type="entry name" value="CLAUDIN"/>
    <property type="match status" value="1"/>
</dbReference>
<gene>
    <name type="primary">CLDN23</name>
</gene>
<keyword id="KW-0965">Cell junction</keyword>
<keyword id="KW-1003">Cell membrane</keyword>
<keyword id="KW-0472">Membrane</keyword>
<keyword id="KW-1267">Proteomics identification</keyword>
<keyword id="KW-1185">Reference proteome</keyword>
<keyword id="KW-0796">Tight junction</keyword>
<keyword id="KW-0812">Transmembrane</keyword>
<keyword id="KW-1133">Transmembrane helix</keyword>
<evidence type="ECO:0000250" key="1"/>
<evidence type="ECO:0000255" key="2"/>
<evidence type="ECO:0000256" key="3">
    <source>
        <dbReference type="SAM" id="MobiDB-lite"/>
    </source>
</evidence>
<evidence type="ECO:0000269" key="4">
    <source>
    </source>
</evidence>
<evidence type="ECO:0000305" key="5"/>
<accession>Q96B33</accession>
<accession>Q08AJ3</accession>
<name>CLD23_HUMAN</name>
<comment type="function">
    <text evidence="1">Plays a major role in tight junction-specific obliteration of the intercellular space, through calcium-independent cell-adhesion activity.</text>
</comment>
<comment type="interaction">
    <interactant intactId="EBI-18201031">
        <id>Q96B33</id>
    </interactant>
    <interactant intactId="EBI-18194029">
        <id>Q96L08</id>
        <label>SUSD3</label>
    </interactant>
    <organismsDiffer>false</organismsDiffer>
    <experiments>3</experiments>
</comment>
<comment type="subcellular location">
    <subcellularLocation>
        <location evidence="1">Cell junction</location>
        <location evidence="1">Tight junction</location>
    </subcellularLocation>
    <subcellularLocation>
        <location evidence="1">Cell membrane</location>
        <topology evidence="1">Multi-pass membrane protein</topology>
    </subcellularLocation>
</comment>
<comment type="tissue specificity">
    <text evidence="4">Expressed in germinal center B-cells, placenta, stomach as well as in colon tumor.</text>
</comment>
<comment type="similarity">
    <text evidence="5">Belongs to the claudin family.</text>
</comment>
<protein>
    <recommendedName>
        <fullName>Claudin-23</fullName>
    </recommendedName>
</protein>
<sequence>MRTPVVMTLGMVLAPCGLLLNLTGTLAPGWRLVKGFLNQPVDVELYQGLWDMCREQSSRERECGQTDQWGYFEAQPVLVARALMVTSLAATVLGLLLASLGVRCWQDEPNFVLAGLSGVVLFVAGLLGLIPVSWYNHFLGDRDVLPAPASPVTVQVSYSLVLGYLGSCLLLLGGFSLALSFAPWCDERCRRRRKGPSAGPRRSSVSTIQVEWPEPDLAPAIKYYSDGQHRPPPAQHRKPKPKPKVGFPMPRPRPKAYTNSVDVLDGEGWESQDAPSCSTHPCDSSLPCDSDL</sequence>
<organism>
    <name type="scientific">Homo sapiens</name>
    <name type="common">Human</name>
    <dbReference type="NCBI Taxonomy" id="9606"/>
    <lineage>
        <taxon>Eukaryota</taxon>
        <taxon>Metazoa</taxon>
        <taxon>Chordata</taxon>
        <taxon>Craniata</taxon>
        <taxon>Vertebrata</taxon>
        <taxon>Euteleostomi</taxon>
        <taxon>Mammalia</taxon>
        <taxon>Eutheria</taxon>
        <taxon>Euarchontoglires</taxon>
        <taxon>Primates</taxon>
        <taxon>Haplorrhini</taxon>
        <taxon>Catarrhini</taxon>
        <taxon>Hominidae</taxon>
        <taxon>Homo</taxon>
    </lineage>
</organism>
<proteinExistence type="evidence at protein level"/>
<reference key="1">
    <citation type="journal article" date="2004" name="Genome Res.">
        <title>The status, quality, and expansion of the NIH full-length cDNA project: the Mammalian Gene Collection (MGC).</title>
        <authorList>
            <consortium name="The MGC Project Team"/>
        </authorList>
    </citation>
    <scope>NUCLEOTIDE SEQUENCE [LARGE SCALE MRNA]</scope>
</reference>
<reference key="2">
    <citation type="journal article" date="2003" name="Int. J. Mol. Med.">
        <title>CLDN23 gene, frequently down-regulated in intestinal-type gastric cancer, is a novel member of CLAUDIN gene family.</title>
        <authorList>
            <person name="Katoh M."/>
            <person name="Katoh M."/>
        </authorList>
    </citation>
    <scope>IDENTIFICATION</scope>
    <scope>TISSUE SPECIFICITY</scope>
</reference>
<feature type="chain" id="PRO_0000144787" description="Claudin-23">
    <location>
        <begin position="1"/>
        <end position="292"/>
    </location>
</feature>
<feature type="topological domain" description="Cytoplasmic" evidence="2">
    <location>
        <begin position="1"/>
        <end position="3"/>
    </location>
</feature>
<feature type="transmembrane region" description="Helical" evidence="2">
    <location>
        <begin position="4"/>
        <end position="24"/>
    </location>
</feature>
<feature type="topological domain" description="Extracellular" evidence="2">
    <location>
        <begin position="25"/>
        <end position="81"/>
    </location>
</feature>
<feature type="transmembrane region" description="Helical" evidence="2">
    <location>
        <begin position="82"/>
        <end position="102"/>
    </location>
</feature>
<feature type="topological domain" description="Cytoplasmic" evidence="2">
    <location>
        <begin position="103"/>
        <end position="110"/>
    </location>
</feature>
<feature type="transmembrane region" description="Helical" evidence="2">
    <location>
        <begin position="111"/>
        <end position="131"/>
    </location>
</feature>
<feature type="topological domain" description="Extracellular" evidence="2">
    <location>
        <begin position="132"/>
        <end position="160"/>
    </location>
</feature>
<feature type="transmembrane region" description="Helical" evidence="2">
    <location>
        <begin position="161"/>
        <end position="181"/>
    </location>
</feature>
<feature type="topological domain" description="Cytoplasmic" evidence="2">
    <location>
        <begin position="182"/>
        <end position="292"/>
    </location>
</feature>
<feature type="region of interest" description="Disordered" evidence="3">
    <location>
        <begin position="222"/>
        <end position="292"/>
    </location>
</feature>
<feature type="compositionally biased region" description="Polar residues" evidence="3">
    <location>
        <begin position="273"/>
        <end position="282"/>
    </location>
</feature>
<feature type="sequence variant" id="VAR_059219" description="In dbSNP:rs12548737.">
    <original>V</original>
    <variation>M</variation>
    <location>
        <position position="210"/>
    </location>
</feature>